<reference key="1">
    <citation type="journal article" date="1996" name="Gene">
        <title>Human rasGTPase-activating protein (human counterpart of GAP1m): sequence of the cDNA, primary structure of the protein, production and chromosomal localization.</title>
        <authorList>
            <person name="Kobayashi M."/>
            <person name="Masui T."/>
            <person name="Kusuda J."/>
            <person name="Kameoka Y."/>
            <person name="Hashimoto K."/>
            <person name="Iwashita S."/>
        </authorList>
    </citation>
    <scope>NUCLEOTIDE SEQUENCE [GENOMIC DNA / MRNA] (ISOFORM 1)</scope>
</reference>
<reference key="2">
    <citation type="journal article" date="1996" name="Genomics">
        <title>cDNA cloning and chromosomal mapping of a novel human GAP (GAP1M), a GTPase-activating protein of Ras.</title>
        <authorList>
            <person name="Li S."/>
            <person name="Satoh H."/>
            <person name="Watanabe T."/>
            <person name="Nakamura S."/>
            <person name="Hattori S."/>
        </authorList>
    </citation>
    <scope>NUCLEOTIDE SEQUENCE [GENOMIC DNA / MRNA] (ISOFORM 2)</scope>
    <source>
        <tissue>Brain</tissue>
    </source>
</reference>
<reference key="3">
    <citation type="journal article" date="1997" name="Curr. Biol.">
        <title>Distinct subcellular localisations of the putative inositol 1,3,4,5-tetrakisphosphate receptors GAP1(IP4BP) and GAP1m result from the GAP1(IP4BP) PH domain directing plasma membrane targeting.</title>
        <authorList>
            <person name="Lockyer P.J."/>
            <person name="Bottomley J.R."/>
            <person name="Reynolds J.S."/>
            <person name="McNulty T.J."/>
            <person name="Venkateswarlu K."/>
            <person name="Potter B.V.L."/>
            <person name="Dempsey C.E."/>
            <person name="Cullen P.J."/>
        </authorList>
    </citation>
    <scope>NUCLEOTIDE SEQUENCE [MRNA] (ISOFORM 2)</scope>
    <source>
        <tissue>Blood</tissue>
    </source>
</reference>
<reference key="4">
    <citation type="journal article" date="2004" name="Nat. Genet.">
        <title>Complete sequencing and characterization of 21,243 full-length human cDNAs.</title>
        <authorList>
            <person name="Ota T."/>
            <person name="Suzuki Y."/>
            <person name="Nishikawa T."/>
            <person name="Otsuki T."/>
            <person name="Sugiyama T."/>
            <person name="Irie R."/>
            <person name="Wakamatsu A."/>
            <person name="Hayashi K."/>
            <person name="Sato H."/>
            <person name="Nagai K."/>
            <person name="Kimura K."/>
            <person name="Makita H."/>
            <person name="Sekine M."/>
            <person name="Obayashi M."/>
            <person name="Nishi T."/>
            <person name="Shibahara T."/>
            <person name="Tanaka T."/>
            <person name="Ishii S."/>
            <person name="Yamamoto J."/>
            <person name="Saito K."/>
            <person name="Kawai Y."/>
            <person name="Isono Y."/>
            <person name="Nakamura Y."/>
            <person name="Nagahari K."/>
            <person name="Murakami K."/>
            <person name="Yasuda T."/>
            <person name="Iwayanagi T."/>
            <person name="Wagatsuma M."/>
            <person name="Shiratori A."/>
            <person name="Sudo H."/>
            <person name="Hosoiri T."/>
            <person name="Kaku Y."/>
            <person name="Kodaira H."/>
            <person name="Kondo H."/>
            <person name="Sugawara M."/>
            <person name="Takahashi M."/>
            <person name="Kanda K."/>
            <person name="Yokoi T."/>
            <person name="Furuya T."/>
            <person name="Kikkawa E."/>
            <person name="Omura Y."/>
            <person name="Abe K."/>
            <person name="Kamihara K."/>
            <person name="Katsuta N."/>
            <person name="Sato K."/>
            <person name="Tanikawa M."/>
            <person name="Yamazaki M."/>
            <person name="Ninomiya K."/>
            <person name="Ishibashi T."/>
            <person name="Yamashita H."/>
            <person name="Murakawa K."/>
            <person name="Fujimori K."/>
            <person name="Tanai H."/>
            <person name="Kimata M."/>
            <person name="Watanabe M."/>
            <person name="Hiraoka S."/>
            <person name="Chiba Y."/>
            <person name="Ishida S."/>
            <person name="Ono Y."/>
            <person name="Takiguchi S."/>
            <person name="Watanabe S."/>
            <person name="Yosida M."/>
            <person name="Hotuta T."/>
            <person name="Kusano J."/>
            <person name="Kanehori K."/>
            <person name="Takahashi-Fujii A."/>
            <person name="Hara H."/>
            <person name="Tanase T.-O."/>
            <person name="Nomura Y."/>
            <person name="Togiya S."/>
            <person name="Komai F."/>
            <person name="Hara R."/>
            <person name="Takeuchi K."/>
            <person name="Arita M."/>
            <person name="Imose N."/>
            <person name="Musashino K."/>
            <person name="Yuuki H."/>
            <person name="Oshima A."/>
            <person name="Sasaki N."/>
            <person name="Aotsuka S."/>
            <person name="Yoshikawa Y."/>
            <person name="Matsunawa H."/>
            <person name="Ichihara T."/>
            <person name="Shiohata N."/>
            <person name="Sano S."/>
            <person name="Moriya S."/>
            <person name="Momiyama H."/>
            <person name="Satoh N."/>
            <person name="Takami S."/>
            <person name="Terashima Y."/>
            <person name="Suzuki O."/>
            <person name="Nakagawa S."/>
            <person name="Senoh A."/>
            <person name="Mizoguchi H."/>
            <person name="Goto Y."/>
            <person name="Shimizu F."/>
            <person name="Wakebe H."/>
            <person name="Hishigaki H."/>
            <person name="Watanabe T."/>
            <person name="Sugiyama A."/>
            <person name="Takemoto M."/>
            <person name="Kawakami B."/>
            <person name="Yamazaki M."/>
            <person name="Watanabe K."/>
            <person name="Kumagai A."/>
            <person name="Itakura S."/>
            <person name="Fukuzumi Y."/>
            <person name="Fujimori Y."/>
            <person name="Komiyama M."/>
            <person name="Tashiro H."/>
            <person name="Tanigami A."/>
            <person name="Fujiwara T."/>
            <person name="Ono T."/>
            <person name="Yamada K."/>
            <person name="Fujii Y."/>
            <person name="Ozaki K."/>
            <person name="Hirao M."/>
            <person name="Ohmori Y."/>
            <person name="Kawabata A."/>
            <person name="Hikiji T."/>
            <person name="Kobatake N."/>
            <person name="Inagaki H."/>
            <person name="Ikema Y."/>
            <person name="Okamoto S."/>
            <person name="Okitani R."/>
            <person name="Kawakami T."/>
            <person name="Noguchi S."/>
            <person name="Itoh T."/>
            <person name="Shigeta K."/>
            <person name="Senba T."/>
            <person name="Matsumura K."/>
            <person name="Nakajima Y."/>
            <person name="Mizuno T."/>
            <person name="Morinaga M."/>
            <person name="Sasaki M."/>
            <person name="Togashi T."/>
            <person name="Oyama M."/>
            <person name="Hata H."/>
            <person name="Watanabe M."/>
            <person name="Komatsu T."/>
            <person name="Mizushima-Sugano J."/>
            <person name="Satoh T."/>
            <person name="Shirai Y."/>
            <person name="Takahashi Y."/>
            <person name="Nakagawa K."/>
            <person name="Okumura K."/>
            <person name="Nagase T."/>
            <person name="Nomura N."/>
            <person name="Kikuchi H."/>
            <person name="Masuho Y."/>
            <person name="Yamashita R."/>
            <person name="Nakai K."/>
            <person name="Yada T."/>
            <person name="Nakamura Y."/>
            <person name="Ohara O."/>
            <person name="Isogai T."/>
            <person name="Sugano S."/>
        </authorList>
    </citation>
    <scope>NUCLEOTIDE SEQUENCE [LARGE SCALE MRNA] (ISOFORM 1)</scope>
    <source>
        <tissue>Spleen</tissue>
    </source>
</reference>
<reference key="5">
    <citation type="journal article" date="2006" name="Nature">
        <title>The DNA sequence, annotation and analysis of human chromosome 3.</title>
        <authorList>
            <person name="Muzny D.M."/>
            <person name="Scherer S.E."/>
            <person name="Kaul R."/>
            <person name="Wang J."/>
            <person name="Yu J."/>
            <person name="Sudbrak R."/>
            <person name="Buhay C.J."/>
            <person name="Chen R."/>
            <person name="Cree A."/>
            <person name="Ding Y."/>
            <person name="Dugan-Rocha S."/>
            <person name="Gill R."/>
            <person name="Gunaratne P."/>
            <person name="Harris R.A."/>
            <person name="Hawes A.C."/>
            <person name="Hernandez J."/>
            <person name="Hodgson A.V."/>
            <person name="Hume J."/>
            <person name="Jackson A."/>
            <person name="Khan Z.M."/>
            <person name="Kovar-Smith C."/>
            <person name="Lewis L.R."/>
            <person name="Lozado R.J."/>
            <person name="Metzker M.L."/>
            <person name="Milosavljevic A."/>
            <person name="Miner G.R."/>
            <person name="Morgan M.B."/>
            <person name="Nazareth L.V."/>
            <person name="Scott G."/>
            <person name="Sodergren E."/>
            <person name="Song X.-Z."/>
            <person name="Steffen D."/>
            <person name="Wei S."/>
            <person name="Wheeler D.A."/>
            <person name="Wright M.W."/>
            <person name="Worley K.C."/>
            <person name="Yuan Y."/>
            <person name="Zhang Z."/>
            <person name="Adams C.Q."/>
            <person name="Ansari-Lari M.A."/>
            <person name="Ayele M."/>
            <person name="Brown M.J."/>
            <person name="Chen G."/>
            <person name="Chen Z."/>
            <person name="Clendenning J."/>
            <person name="Clerc-Blankenburg K.P."/>
            <person name="Chen R."/>
            <person name="Chen Z."/>
            <person name="Davis C."/>
            <person name="Delgado O."/>
            <person name="Dinh H.H."/>
            <person name="Dong W."/>
            <person name="Draper H."/>
            <person name="Ernst S."/>
            <person name="Fu G."/>
            <person name="Gonzalez-Garay M.L."/>
            <person name="Garcia D.K."/>
            <person name="Gillett W."/>
            <person name="Gu J."/>
            <person name="Hao B."/>
            <person name="Haugen E."/>
            <person name="Havlak P."/>
            <person name="He X."/>
            <person name="Hennig S."/>
            <person name="Hu S."/>
            <person name="Huang W."/>
            <person name="Jackson L.R."/>
            <person name="Jacob L.S."/>
            <person name="Kelly S.H."/>
            <person name="Kube M."/>
            <person name="Levy R."/>
            <person name="Li Z."/>
            <person name="Liu B."/>
            <person name="Liu J."/>
            <person name="Liu W."/>
            <person name="Lu J."/>
            <person name="Maheshwari M."/>
            <person name="Nguyen B.-V."/>
            <person name="Okwuonu G.O."/>
            <person name="Palmeiri A."/>
            <person name="Pasternak S."/>
            <person name="Perez L.M."/>
            <person name="Phelps K.A."/>
            <person name="Plopper F.J."/>
            <person name="Qiang B."/>
            <person name="Raymond C."/>
            <person name="Rodriguez R."/>
            <person name="Saenphimmachak C."/>
            <person name="Santibanez J."/>
            <person name="Shen H."/>
            <person name="Shen Y."/>
            <person name="Subramanian S."/>
            <person name="Tabor P.E."/>
            <person name="Verduzco D."/>
            <person name="Waldron L."/>
            <person name="Wang J."/>
            <person name="Wang J."/>
            <person name="Wang Q."/>
            <person name="Williams G.A."/>
            <person name="Wong G.K.-S."/>
            <person name="Yao Z."/>
            <person name="Zhang J."/>
            <person name="Zhang X."/>
            <person name="Zhao G."/>
            <person name="Zhou J."/>
            <person name="Zhou Y."/>
            <person name="Nelson D."/>
            <person name="Lehrach H."/>
            <person name="Reinhardt R."/>
            <person name="Naylor S.L."/>
            <person name="Yang H."/>
            <person name="Olson M."/>
            <person name="Weinstock G."/>
            <person name="Gibbs R.A."/>
        </authorList>
    </citation>
    <scope>NUCLEOTIDE SEQUENCE [LARGE SCALE GENOMIC DNA]</scope>
</reference>
<reference key="6">
    <citation type="submission" date="2005-07" db="EMBL/GenBank/DDBJ databases">
        <authorList>
            <person name="Mural R.J."/>
            <person name="Istrail S."/>
            <person name="Sutton G.G."/>
            <person name="Florea L."/>
            <person name="Halpern A.L."/>
            <person name="Mobarry C.M."/>
            <person name="Lippert R."/>
            <person name="Walenz B."/>
            <person name="Shatkay H."/>
            <person name="Dew I."/>
            <person name="Miller J.R."/>
            <person name="Flanigan M.J."/>
            <person name="Edwards N.J."/>
            <person name="Bolanos R."/>
            <person name="Fasulo D."/>
            <person name="Halldorsson B.V."/>
            <person name="Hannenhalli S."/>
            <person name="Turner R."/>
            <person name="Yooseph S."/>
            <person name="Lu F."/>
            <person name="Nusskern D.R."/>
            <person name="Shue B.C."/>
            <person name="Zheng X.H."/>
            <person name="Zhong F."/>
            <person name="Delcher A.L."/>
            <person name="Huson D.H."/>
            <person name="Kravitz S.A."/>
            <person name="Mouchard L."/>
            <person name="Reinert K."/>
            <person name="Remington K.A."/>
            <person name="Clark A.G."/>
            <person name="Waterman M.S."/>
            <person name="Eichler E.E."/>
            <person name="Adams M.D."/>
            <person name="Hunkapiller M.W."/>
            <person name="Myers E.W."/>
            <person name="Venter J.C."/>
        </authorList>
    </citation>
    <scope>NUCLEOTIDE SEQUENCE [LARGE SCALE GENOMIC DNA]</scope>
</reference>
<reference key="7">
    <citation type="journal article" date="2012" name="Mol. Cell. Proteomics">
        <title>Comparative large-scale characterisation of plant vs. mammal proteins reveals similar and idiosyncratic N-alpha acetylation features.</title>
        <authorList>
            <person name="Bienvenut W.V."/>
            <person name="Sumpton D."/>
            <person name="Martinez A."/>
            <person name="Lilla S."/>
            <person name="Espagne C."/>
            <person name="Meinnel T."/>
            <person name="Giglione C."/>
        </authorList>
    </citation>
    <scope>ACETYLATION [LARGE SCALE ANALYSIS] AT ALA-2</scope>
    <scope>CLEAVAGE OF INITIATOR METHIONINE [LARGE SCALE ANALYSIS]</scope>
    <scope>IDENTIFICATION BY MASS SPECTROMETRY [LARGE SCALE ANALYSIS]</scope>
</reference>
<reference key="8">
    <citation type="journal article" date="2012" name="Proc. Natl. Acad. Sci. U.S.A.">
        <title>N-terminal acetylome analyses and functional insights of the N-terminal acetyltransferase NatB.</title>
        <authorList>
            <person name="Van Damme P."/>
            <person name="Lasa M."/>
            <person name="Polevoda B."/>
            <person name="Gazquez C."/>
            <person name="Elosegui-Artola A."/>
            <person name="Kim D.S."/>
            <person name="De Juan-Pardo E."/>
            <person name="Demeyer K."/>
            <person name="Hole K."/>
            <person name="Larrea E."/>
            <person name="Timmerman E."/>
            <person name="Prieto J."/>
            <person name="Arnesen T."/>
            <person name="Sherman F."/>
            <person name="Gevaert K."/>
            <person name="Aldabe R."/>
        </authorList>
    </citation>
    <scope>ACETYLATION [LARGE SCALE ANALYSIS] AT ALA-2</scope>
    <scope>CLEAVAGE OF INITIATOR METHIONINE [LARGE SCALE ANALYSIS]</scope>
    <scope>IDENTIFICATION BY MASS SPECTROMETRY [LARGE SCALE ANALYSIS]</scope>
</reference>
<name>RASA2_HUMAN</name>
<sequence>MAAAAPAAAAASSEAPAASATAEPEAGDQDSREVRVLQSLRGKICEAKNLLPYLGPHKMRDCFCTINLDQEEVYRTQVVEKSLSPFFSEEFYFEIPRTFQYLSFYVYDKNVLQRDLRIGKVAIKKEDLCNHSGKETWFSLQPVDSNSEVQGKVHLELKLNELITENGTVCQQLVVHIKACHGLPLINGQSCDPYATVSLVGPSRNDQKKTKVKKKTSNPQFNEIFYFEVTRSSSYTRKSQFQVEEEDIEKLEIRIDLWNNGNLVQDVFLGEIKVPVNVLRTDSSHQAWYLLQPRDNGNKSSKTDDLGSLRLNICYTEDYVLPSEYYGPLKTLLLKSPDVQPISASAAYILSEICRDKNDAVLPLVRLLLHHDKLVPFATAVAELDLKDTQDANTIFRGNSLATRCLDEMMKIVGGHYLKVTLKPILDEICDSSKSCEIDPIKLKEGDNVENNKENLRYYVDKLFNTIVKSSMSCPTVMCDIFYSLRQMATQRFPNDPHVQYSAVSSFVFLRFFAVAVVSPHTFHLRPHHPDAQTIRTLTLISKTIQTLGSWGSLSKSKSSFKETFMCEFFKMFQEEGYIIAVKKFLDEISSTETKESSGTSEPVHLKEGEMYKRAQGRTRIGKKNFKKRWFCLTSRELTYHKQPGSKDAIYTIPVKNILAVEKLEESSFNKKNMFQVIHTEKPLYVQANNCVEANEWIDVLCRVSRCNQNRLSFYHPSVYLNGNWLCCQETGENTLGCKPCTAGVPADIQIDIDEDRETERIYSLFTLSLLKLQKMEEACGTIAVYQGPQKEPDDYSNFVIEDSVTTFKTIQQIKSIIEKLDEPHEKYRKKRSSSAKYGSKENPIVGKAS</sequence>
<dbReference type="EMBL" id="D78155">
    <property type="protein sequence ID" value="BAA11230.1"/>
    <property type="molecule type" value="mRNA"/>
</dbReference>
<dbReference type="EMBL" id="D78156">
    <property type="protein sequence ID" value="BAA11231.1"/>
    <property type="molecule type" value="Genomic_DNA"/>
</dbReference>
<dbReference type="EMBL" id="D82880">
    <property type="protein sequence ID" value="BAA11621.1"/>
    <property type="molecule type" value="mRNA"/>
</dbReference>
<dbReference type="EMBL" id="D82881">
    <property type="protein sequence ID" value="BAA11622.1"/>
    <property type="molecule type" value="Genomic_DNA"/>
</dbReference>
<dbReference type="EMBL" id="AF115573">
    <property type="protein sequence ID" value="AAD09821.1"/>
    <property type="molecule type" value="mRNA"/>
</dbReference>
<dbReference type="EMBL" id="AC010184">
    <property type="status" value="NOT_ANNOTATED_CDS"/>
    <property type="molecule type" value="Genomic_DNA"/>
</dbReference>
<dbReference type="EMBL" id="AC092977">
    <property type="status" value="NOT_ANNOTATED_CDS"/>
    <property type="molecule type" value="Genomic_DNA"/>
</dbReference>
<dbReference type="EMBL" id="CH471052">
    <property type="protein sequence ID" value="EAW78999.1"/>
    <property type="molecule type" value="Genomic_DNA"/>
</dbReference>
<dbReference type="EMBL" id="AK292016">
    <property type="protein sequence ID" value="BAF84705.1"/>
    <property type="molecule type" value="mRNA"/>
</dbReference>
<dbReference type="CCDS" id="CCDS3117.1">
    <molecule id="Q15283-2"/>
</dbReference>
<dbReference type="PIR" id="JC5047">
    <property type="entry name" value="JC5047"/>
</dbReference>
<dbReference type="RefSeq" id="NP_001290174.1">
    <molecule id="Q15283-1"/>
    <property type="nucleotide sequence ID" value="NM_001303245.3"/>
</dbReference>
<dbReference type="RefSeq" id="NP_001290175.1">
    <property type="nucleotide sequence ID" value="NM_001303246.1"/>
</dbReference>
<dbReference type="RefSeq" id="NP_006497.2">
    <molecule id="Q15283-2"/>
    <property type="nucleotide sequence ID" value="NM_006506.3"/>
</dbReference>
<dbReference type="SMR" id="Q15283"/>
<dbReference type="BioGRID" id="111857">
    <property type="interactions" value="26"/>
</dbReference>
<dbReference type="FunCoup" id="Q15283">
    <property type="interactions" value="1467"/>
</dbReference>
<dbReference type="IntAct" id="Q15283">
    <property type="interactions" value="16"/>
</dbReference>
<dbReference type="STRING" id="9606.ENSP00000286364"/>
<dbReference type="GlyGen" id="Q15283">
    <property type="glycosylation" value="1 site, 1 O-linked glycan (1 site)"/>
</dbReference>
<dbReference type="iPTMnet" id="Q15283"/>
<dbReference type="PhosphoSitePlus" id="Q15283"/>
<dbReference type="SwissPalm" id="Q15283"/>
<dbReference type="BioMuta" id="RASA2"/>
<dbReference type="DMDM" id="519668674"/>
<dbReference type="jPOST" id="Q15283"/>
<dbReference type="MassIVE" id="Q15283"/>
<dbReference type="PaxDb" id="9606-ENSP00000286364"/>
<dbReference type="PeptideAtlas" id="Q15283"/>
<dbReference type="ProteomicsDB" id="32185"/>
<dbReference type="ProteomicsDB" id="60511">
    <molecule id="Q15283-1"/>
</dbReference>
<dbReference type="Pumba" id="Q15283"/>
<dbReference type="Antibodypedia" id="18019">
    <property type="antibodies" value="53 antibodies from 19 providers"/>
</dbReference>
<dbReference type="DNASU" id="5922"/>
<dbReference type="Ensembl" id="ENST00000286364.9">
    <molecule id="Q15283-2"/>
    <property type="protein sequence ID" value="ENSP00000286364.3"/>
    <property type="gene ID" value="ENSG00000155903.14"/>
</dbReference>
<dbReference type="GeneID" id="5922"/>
<dbReference type="KEGG" id="hsa:5922"/>
<dbReference type="MANE-Select" id="ENST00000286364.9">
    <molecule id="Q15283-2"/>
    <property type="protein sequence ID" value="ENSP00000286364.3"/>
    <property type="RefSeq nucleotide sequence ID" value="NM_006506.5"/>
    <property type="RefSeq protein sequence ID" value="NP_006497.2"/>
</dbReference>
<dbReference type="UCSC" id="uc003etz.2">
    <molecule id="Q15283-1"/>
    <property type="organism name" value="human"/>
</dbReference>
<dbReference type="AGR" id="HGNC:9872"/>
<dbReference type="CTD" id="5922"/>
<dbReference type="DisGeNET" id="5922"/>
<dbReference type="GeneCards" id="RASA2"/>
<dbReference type="GeneReviews" id="RASA2"/>
<dbReference type="HGNC" id="HGNC:9872">
    <property type="gene designation" value="RASA2"/>
</dbReference>
<dbReference type="HPA" id="ENSG00000155903">
    <property type="expression patterns" value="Low tissue specificity"/>
</dbReference>
<dbReference type="MalaCards" id="RASA2"/>
<dbReference type="MIM" id="601589">
    <property type="type" value="gene"/>
</dbReference>
<dbReference type="neXtProt" id="NX_Q15283"/>
<dbReference type="OpenTargets" id="ENSG00000155903"/>
<dbReference type="Orphanet" id="648">
    <property type="disease" value="Noonan syndrome"/>
</dbReference>
<dbReference type="PharmGKB" id="PA34233"/>
<dbReference type="VEuPathDB" id="HostDB:ENSG00000155903"/>
<dbReference type="eggNOG" id="KOG2059">
    <property type="taxonomic scope" value="Eukaryota"/>
</dbReference>
<dbReference type="GeneTree" id="ENSGT00940000158201"/>
<dbReference type="HOGENOM" id="CLU_008096_1_1_1"/>
<dbReference type="InParanoid" id="Q15283"/>
<dbReference type="OrthoDB" id="1562946at2759"/>
<dbReference type="PAN-GO" id="Q15283">
    <property type="GO annotations" value="0 GO annotations based on evolutionary models"/>
</dbReference>
<dbReference type="PhylomeDB" id="Q15283"/>
<dbReference type="TreeFam" id="TF105302"/>
<dbReference type="PathwayCommons" id="Q15283"/>
<dbReference type="Reactome" id="R-HSA-5658442">
    <property type="pathway name" value="Regulation of RAS by GAPs"/>
</dbReference>
<dbReference type="SignaLink" id="Q15283"/>
<dbReference type="BioGRID-ORCS" id="5922">
    <property type="hits" value="46 hits in 1160 CRISPR screens"/>
</dbReference>
<dbReference type="ChiTaRS" id="RASA2">
    <property type="organism name" value="human"/>
</dbReference>
<dbReference type="GenomeRNAi" id="5922"/>
<dbReference type="Pharos" id="Q15283">
    <property type="development level" value="Tdark"/>
</dbReference>
<dbReference type="PRO" id="PR:Q15283"/>
<dbReference type="Proteomes" id="UP000005640">
    <property type="component" value="Chromosome 3"/>
</dbReference>
<dbReference type="RNAct" id="Q15283">
    <property type="molecule type" value="protein"/>
</dbReference>
<dbReference type="Bgee" id="ENSG00000155903">
    <property type="expression patterns" value="Expressed in epithelium of nasopharynx and 188 other cell types or tissues"/>
</dbReference>
<dbReference type="ExpressionAtlas" id="Q15283">
    <property type="expression patterns" value="baseline and differential"/>
</dbReference>
<dbReference type="GO" id="GO:0005829">
    <property type="term" value="C:cytosol"/>
    <property type="evidence" value="ECO:0000304"/>
    <property type="project" value="Reactome"/>
</dbReference>
<dbReference type="GO" id="GO:0048471">
    <property type="term" value="C:perinuclear region of cytoplasm"/>
    <property type="evidence" value="ECO:0007669"/>
    <property type="project" value="UniProtKB-SubCell"/>
</dbReference>
<dbReference type="GO" id="GO:0005096">
    <property type="term" value="F:GTPase activator activity"/>
    <property type="evidence" value="ECO:0000304"/>
    <property type="project" value="ProtInc"/>
</dbReference>
<dbReference type="GO" id="GO:0005543">
    <property type="term" value="F:phospholipid binding"/>
    <property type="evidence" value="ECO:0007669"/>
    <property type="project" value="InterPro"/>
</dbReference>
<dbReference type="GO" id="GO:0008270">
    <property type="term" value="F:zinc ion binding"/>
    <property type="evidence" value="ECO:0007669"/>
    <property type="project" value="UniProtKB-KW"/>
</dbReference>
<dbReference type="GO" id="GO:0035556">
    <property type="term" value="P:intracellular signal transduction"/>
    <property type="evidence" value="ECO:0007669"/>
    <property type="project" value="InterPro"/>
</dbReference>
<dbReference type="GO" id="GO:0046580">
    <property type="term" value="P:negative regulation of Ras protein signal transduction"/>
    <property type="evidence" value="ECO:0007669"/>
    <property type="project" value="InterPro"/>
</dbReference>
<dbReference type="GO" id="GO:0007165">
    <property type="term" value="P:signal transduction"/>
    <property type="evidence" value="ECO:0000304"/>
    <property type="project" value="ProtInc"/>
</dbReference>
<dbReference type="CDD" id="cd08401">
    <property type="entry name" value="C2A_RasA2_RasA3"/>
    <property type="match status" value="1"/>
</dbReference>
<dbReference type="CDD" id="cd04010">
    <property type="entry name" value="C2B_RasA3"/>
    <property type="match status" value="1"/>
</dbReference>
<dbReference type="CDD" id="cd13370">
    <property type="entry name" value="PH_GAP1m_mammal-like"/>
    <property type="match status" value="1"/>
</dbReference>
<dbReference type="CDD" id="cd05394">
    <property type="entry name" value="RasGAP_RASA2"/>
    <property type="match status" value="1"/>
</dbReference>
<dbReference type="FunFam" id="1.10.506.10:FF:000011">
    <property type="entry name" value="Ras GTPase-activating protein 2 isoform 3"/>
    <property type="match status" value="1"/>
</dbReference>
<dbReference type="FunFam" id="2.30.29.30:FF:000144">
    <property type="entry name" value="Ras GTPase-activating protein 2 isoform 3"/>
    <property type="match status" value="1"/>
</dbReference>
<dbReference type="FunFam" id="2.60.40.150:FF:000086">
    <property type="entry name" value="Ras GTPase-activating protein 2 isoform 3"/>
    <property type="match status" value="1"/>
</dbReference>
<dbReference type="FunFam" id="2.60.40.150:FF:000069">
    <property type="entry name" value="Ras GTPase-activating protein 4 isoform 1"/>
    <property type="match status" value="1"/>
</dbReference>
<dbReference type="Gene3D" id="2.60.40.150">
    <property type="entry name" value="C2 domain"/>
    <property type="match status" value="2"/>
</dbReference>
<dbReference type="Gene3D" id="1.10.506.10">
    <property type="entry name" value="GTPase Activation - p120gap, domain 1"/>
    <property type="match status" value="1"/>
</dbReference>
<dbReference type="Gene3D" id="2.30.29.30">
    <property type="entry name" value="Pleckstrin-homology domain (PH domain)/Phosphotyrosine-binding domain (PTB)"/>
    <property type="match status" value="1"/>
</dbReference>
<dbReference type="InterPro" id="IPR000008">
    <property type="entry name" value="C2_dom"/>
</dbReference>
<dbReference type="InterPro" id="IPR035892">
    <property type="entry name" value="C2_domain_sf"/>
</dbReference>
<dbReference type="InterPro" id="IPR011993">
    <property type="entry name" value="PH-like_dom_sf"/>
</dbReference>
<dbReference type="InterPro" id="IPR001849">
    <property type="entry name" value="PH_domain"/>
</dbReference>
<dbReference type="InterPro" id="IPR039360">
    <property type="entry name" value="Ras_GTPase"/>
</dbReference>
<dbReference type="InterPro" id="IPR037773">
    <property type="entry name" value="RASA2_PH"/>
</dbReference>
<dbReference type="InterPro" id="IPR023152">
    <property type="entry name" value="RasGAP_CS"/>
</dbReference>
<dbReference type="InterPro" id="IPR001936">
    <property type="entry name" value="RasGAP_dom"/>
</dbReference>
<dbReference type="InterPro" id="IPR008936">
    <property type="entry name" value="Rho_GTPase_activation_prot"/>
</dbReference>
<dbReference type="InterPro" id="IPR001562">
    <property type="entry name" value="Znf_Btk_motif"/>
</dbReference>
<dbReference type="PANTHER" id="PTHR10194:SF21">
    <property type="entry name" value="RAS GTPASE-ACTIVATING PROTEIN 2"/>
    <property type="match status" value="1"/>
</dbReference>
<dbReference type="PANTHER" id="PTHR10194">
    <property type="entry name" value="RAS GTPASE-ACTIVATING PROTEINS"/>
    <property type="match status" value="1"/>
</dbReference>
<dbReference type="Pfam" id="PF00779">
    <property type="entry name" value="BTK"/>
    <property type="match status" value="1"/>
</dbReference>
<dbReference type="Pfam" id="PF00168">
    <property type="entry name" value="C2"/>
    <property type="match status" value="2"/>
</dbReference>
<dbReference type="Pfam" id="PF00169">
    <property type="entry name" value="PH"/>
    <property type="match status" value="1"/>
</dbReference>
<dbReference type="Pfam" id="PF00616">
    <property type="entry name" value="RasGAP"/>
    <property type="match status" value="2"/>
</dbReference>
<dbReference type="PRINTS" id="PR00402">
    <property type="entry name" value="TECBTKDOMAIN"/>
</dbReference>
<dbReference type="SMART" id="SM00107">
    <property type="entry name" value="BTK"/>
    <property type="match status" value="1"/>
</dbReference>
<dbReference type="SMART" id="SM00239">
    <property type="entry name" value="C2"/>
    <property type="match status" value="2"/>
</dbReference>
<dbReference type="SMART" id="SM00233">
    <property type="entry name" value="PH"/>
    <property type="match status" value="1"/>
</dbReference>
<dbReference type="SMART" id="SM00323">
    <property type="entry name" value="RasGAP"/>
    <property type="match status" value="1"/>
</dbReference>
<dbReference type="SUPFAM" id="SSF49562">
    <property type="entry name" value="C2 domain (Calcium/lipid-binding domain, CaLB)"/>
    <property type="match status" value="2"/>
</dbReference>
<dbReference type="SUPFAM" id="SSF48350">
    <property type="entry name" value="GTPase activation domain, GAP"/>
    <property type="match status" value="1"/>
</dbReference>
<dbReference type="SUPFAM" id="SSF50729">
    <property type="entry name" value="PH domain-like"/>
    <property type="match status" value="1"/>
</dbReference>
<dbReference type="PROSITE" id="PS50004">
    <property type="entry name" value="C2"/>
    <property type="match status" value="2"/>
</dbReference>
<dbReference type="PROSITE" id="PS50003">
    <property type="entry name" value="PH_DOMAIN"/>
    <property type="match status" value="1"/>
</dbReference>
<dbReference type="PROSITE" id="PS00509">
    <property type="entry name" value="RAS_GTPASE_ACTIV_1"/>
    <property type="match status" value="1"/>
</dbReference>
<dbReference type="PROSITE" id="PS50018">
    <property type="entry name" value="RAS_GTPASE_ACTIV_2"/>
    <property type="match status" value="1"/>
</dbReference>
<dbReference type="PROSITE" id="PS51113">
    <property type="entry name" value="ZF_BTK"/>
    <property type="match status" value="1"/>
</dbReference>
<proteinExistence type="evidence at protein level"/>
<protein>
    <recommendedName>
        <fullName>Ras GTPase-activating protein 2</fullName>
    </recommendedName>
    <alternativeName>
        <fullName>GTPase-activating protein 1m</fullName>
        <shortName>GAP1m</shortName>
    </alternativeName>
</protein>
<feature type="initiator methionine" description="Removed" evidence="10 11">
    <location>
        <position position="1"/>
    </location>
</feature>
<feature type="chain" id="PRO_0000056638" description="Ras GTPase-activating protein 2">
    <location>
        <begin position="2"/>
        <end position="850"/>
    </location>
</feature>
<feature type="domain" description="C2 1" evidence="2">
    <location>
        <begin position="20"/>
        <end position="138"/>
    </location>
</feature>
<feature type="domain" description="C2 2" evidence="2">
    <location>
        <begin position="149"/>
        <end position="289"/>
    </location>
</feature>
<feature type="domain" description="Ras-GAP" evidence="4">
    <location>
        <begin position="372"/>
        <end position="589"/>
    </location>
</feature>
<feature type="domain" description="PH" evidence="3">
    <location>
        <begin position="604"/>
        <end position="706"/>
    </location>
</feature>
<feature type="zinc finger region" description="Btk-type" evidence="5">
    <location>
        <begin position="708"/>
        <end position="744"/>
    </location>
</feature>
<feature type="region of interest" description="Disordered" evidence="6">
    <location>
        <begin position="1"/>
        <end position="32"/>
    </location>
</feature>
<feature type="region of interest" description="Disordered" evidence="6">
    <location>
        <begin position="825"/>
        <end position="850"/>
    </location>
</feature>
<feature type="compositionally biased region" description="Low complexity" evidence="6">
    <location>
        <begin position="1"/>
        <end position="24"/>
    </location>
</feature>
<feature type="binding site" evidence="5">
    <location>
        <position position="716"/>
    </location>
    <ligand>
        <name>Zn(2+)</name>
        <dbReference type="ChEBI" id="CHEBI:29105"/>
    </ligand>
</feature>
<feature type="binding site" evidence="5">
    <location>
        <position position="727"/>
    </location>
    <ligand>
        <name>Zn(2+)</name>
        <dbReference type="ChEBI" id="CHEBI:29105"/>
    </ligand>
</feature>
<feature type="binding site" evidence="5">
    <location>
        <position position="728"/>
    </location>
    <ligand>
        <name>Zn(2+)</name>
        <dbReference type="ChEBI" id="CHEBI:29105"/>
    </ligand>
</feature>
<feature type="binding site" evidence="5">
    <location>
        <position position="738"/>
    </location>
    <ligand>
        <name>Zn(2+)</name>
        <dbReference type="ChEBI" id="CHEBI:29105"/>
    </ligand>
</feature>
<feature type="site" description="Arginine finger; crucial for GTP hydrolysis by stabilizing the transition state" evidence="4">
    <location>
        <position position="397"/>
    </location>
</feature>
<feature type="modified residue" description="N-acetylalanine" evidence="10 11">
    <location>
        <position position="2"/>
    </location>
</feature>
<feature type="modified residue" description="Phosphoserine" evidence="1">
    <location>
        <position position="555"/>
    </location>
</feature>
<feature type="splice variant" id="VSP_046545" description="In isoform 2." evidence="7 8">
    <location>
        <position position="646"/>
    </location>
</feature>
<feature type="sequence conflict" description="In Ref. 1; BAA11230." evidence="9" ref="1">
    <original>T</original>
    <variation>A</variation>
    <location>
        <position position="216"/>
    </location>
</feature>
<feature type="sequence conflict" description="In Ref. 4; BAF84705." evidence="9" ref="4">
    <original>F</original>
    <variation>S</variation>
    <location>
        <position position="225"/>
    </location>
</feature>
<feature type="sequence conflict" description="In Ref. 2; BAA11621." evidence="9" ref="2">
    <original>G</original>
    <variation>EFIER</variation>
    <location>
        <position position="645"/>
    </location>
</feature>
<keyword id="KW-0007">Acetylation</keyword>
<keyword id="KW-0025">Alternative splicing</keyword>
<keyword id="KW-0963">Cytoplasm</keyword>
<keyword id="KW-0343">GTPase activation</keyword>
<keyword id="KW-0479">Metal-binding</keyword>
<keyword id="KW-0597">Phosphoprotein</keyword>
<keyword id="KW-1267">Proteomics identification</keyword>
<keyword id="KW-1185">Reference proteome</keyword>
<keyword id="KW-0677">Repeat</keyword>
<keyword id="KW-0862">Zinc</keyword>
<keyword id="KW-0863">Zinc-finger</keyword>
<evidence type="ECO:0000250" key="1">
    <source>
        <dbReference type="UniProtKB" id="P58069"/>
    </source>
</evidence>
<evidence type="ECO:0000255" key="2">
    <source>
        <dbReference type="PROSITE-ProRule" id="PRU00041"/>
    </source>
</evidence>
<evidence type="ECO:0000255" key="3">
    <source>
        <dbReference type="PROSITE-ProRule" id="PRU00145"/>
    </source>
</evidence>
<evidence type="ECO:0000255" key="4">
    <source>
        <dbReference type="PROSITE-ProRule" id="PRU00167"/>
    </source>
</evidence>
<evidence type="ECO:0000255" key="5">
    <source>
        <dbReference type="PROSITE-ProRule" id="PRU00432"/>
    </source>
</evidence>
<evidence type="ECO:0000256" key="6">
    <source>
        <dbReference type="SAM" id="MobiDB-lite"/>
    </source>
</evidence>
<evidence type="ECO:0000303" key="7">
    <source>
    </source>
</evidence>
<evidence type="ECO:0000303" key="8">
    <source>
    </source>
</evidence>
<evidence type="ECO:0000305" key="9"/>
<evidence type="ECO:0007744" key="10">
    <source>
    </source>
</evidence>
<evidence type="ECO:0007744" key="11">
    <source>
    </source>
</evidence>
<gene>
    <name type="primary">RASA2</name>
    <name type="synonym">GAP1M</name>
    <name type="synonym">RASGAP</name>
</gene>
<accession>Q15283</accession>
<accession>A8K7K1</accession>
<accession>G3V0F9</accession>
<accession>O00695</accession>
<accession>Q15284</accession>
<accession>Q92594</accession>
<accession>Q99577</accession>
<accession>Q9UEQ2</accession>
<comment type="function">
    <text>Inhibitory regulator of the Ras-cyclic AMP pathway. Binds inositol tetrakisphosphate (IP4).</text>
</comment>
<comment type="interaction">
    <interactant intactId="EBI-54493585">
        <id>Q15283</id>
    </interactant>
    <interactant intactId="EBI-396155">
        <id>Q14978</id>
        <label>NOLC1</label>
    </interactant>
    <organismsDiffer>false</organismsDiffer>
    <experiments>2</experiments>
</comment>
<comment type="subcellular location">
    <subcellularLocation>
        <location>Cytoplasm</location>
    </subcellularLocation>
    <subcellularLocation>
        <location>Cytoplasm</location>
        <location>Perinuclear region</location>
    </subcellularLocation>
</comment>
<comment type="alternative products">
    <event type="alternative splicing"/>
    <isoform>
        <id>Q15283-1</id>
        <name>1</name>
        <sequence type="displayed"/>
    </isoform>
    <isoform>
        <id>Q15283-2</id>
        <name>2</name>
        <sequence type="described" ref="VSP_046545"/>
    </isoform>
</comment>
<organism>
    <name type="scientific">Homo sapiens</name>
    <name type="common">Human</name>
    <dbReference type="NCBI Taxonomy" id="9606"/>
    <lineage>
        <taxon>Eukaryota</taxon>
        <taxon>Metazoa</taxon>
        <taxon>Chordata</taxon>
        <taxon>Craniata</taxon>
        <taxon>Vertebrata</taxon>
        <taxon>Euteleostomi</taxon>
        <taxon>Mammalia</taxon>
        <taxon>Eutheria</taxon>
        <taxon>Euarchontoglires</taxon>
        <taxon>Primates</taxon>
        <taxon>Haplorrhini</taxon>
        <taxon>Catarrhini</taxon>
        <taxon>Hominidae</taxon>
        <taxon>Homo</taxon>
    </lineage>
</organism>